<name>IPGL1_ARATH</name>
<accession>Q9LMK4</accession>
<feature type="chain" id="PRO_0000458667" description="INCREASED PETAL GROWTH ANISOTROPY 1-like protein 1">
    <location>
        <begin position="1"/>
        <end position="392"/>
    </location>
</feature>
<feature type="region of interest" description="Disordered" evidence="2">
    <location>
        <begin position="65"/>
        <end position="128"/>
    </location>
</feature>
<feature type="coiled-coil region" evidence="1">
    <location>
        <begin position="11"/>
        <end position="52"/>
    </location>
</feature>
<feature type="coiled-coil region" evidence="1">
    <location>
        <begin position="269"/>
        <end position="299"/>
    </location>
</feature>
<feature type="compositionally biased region" description="Polar residues" evidence="2">
    <location>
        <begin position="65"/>
        <end position="76"/>
    </location>
</feature>
<feature type="compositionally biased region" description="Polar residues" evidence="2">
    <location>
        <begin position="100"/>
        <end position="109"/>
    </location>
</feature>
<organism>
    <name type="scientific">Arabidopsis thaliana</name>
    <name type="common">Mouse-ear cress</name>
    <dbReference type="NCBI Taxonomy" id="3702"/>
    <lineage>
        <taxon>Eukaryota</taxon>
        <taxon>Viridiplantae</taxon>
        <taxon>Streptophyta</taxon>
        <taxon>Embryophyta</taxon>
        <taxon>Tracheophyta</taxon>
        <taxon>Spermatophyta</taxon>
        <taxon>Magnoliopsida</taxon>
        <taxon>eudicotyledons</taxon>
        <taxon>Gunneridae</taxon>
        <taxon>Pentapetalae</taxon>
        <taxon>rosids</taxon>
        <taxon>malvids</taxon>
        <taxon>Brassicales</taxon>
        <taxon>Brassicaceae</taxon>
        <taxon>Camelineae</taxon>
        <taxon>Arabidopsis</taxon>
    </lineage>
</organism>
<evidence type="ECO:0000255" key="1"/>
<evidence type="ECO:0000256" key="2">
    <source>
        <dbReference type="SAM" id="MobiDB-lite"/>
    </source>
</evidence>
<evidence type="ECO:0000269" key="3">
    <source>
    </source>
</evidence>
<evidence type="ECO:0000303" key="4">
    <source>
    </source>
</evidence>
<evidence type="ECO:0000305" key="5"/>
<evidence type="ECO:0000312" key="6">
    <source>
        <dbReference type="Araport" id="AT1G07120"/>
    </source>
</evidence>
<evidence type="ECO:0000312" key="7">
    <source>
        <dbReference type="EMBL" id="AAF82209.1"/>
    </source>
</evidence>
<sequence>MLPNGEDDSDLLRLVKELQAYLVRNDKLEKENHELRQEVARLRAQVSNLKSHENERKSMLWKKLQSSYDGSNTDGSNLKAPESVKSNTKGQEVRNPNPKPTIQGQSTATKPPPPPPLPSKRTLGKRSVRRAPEVVEFYRALTKRESHMGNKINQNGVLSPAFNRNMIGEIENRSKYLSDIKSDTDRHRDHIHILISKVEAATFTDISEVETFVKWIDEELSSLVDERAVLKHFPKWPERKVDSLREAACNYKRPKNLGNEILSFKDNPKDSLTQALQRIQSLQDRLEESVNNTEKMRDSTGKRYKDFQIPWEWMLDTGLIGQLKYSSLRLAQEYMKRIAKELESNGSGKEGNLMLQGVRFAYTIHQFAGGFDGETLSIFHELKKITTGETRG</sequence>
<keyword id="KW-0175">Coiled coil</keyword>
<keyword id="KW-0963">Cytoplasm</keyword>
<keyword id="KW-0206">Cytoskeleton</keyword>
<keyword id="KW-1185">Reference proteome</keyword>
<proteinExistence type="inferred from homology"/>
<dbReference type="EMBL" id="AC067971">
    <property type="protein sequence ID" value="AAF82209.1"/>
    <property type="molecule type" value="Genomic_DNA"/>
</dbReference>
<dbReference type="EMBL" id="CP002684">
    <property type="protein sequence ID" value="AEE28078.1"/>
    <property type="molecule type" value="Genomic_DNA"/>
</dbReference>
<dbReference type="PIR" id="A86206">
    <property type="entry name" value="A86206"/>
</dbReference>
<dbReference type="RefSeq" id="NP_172192.1">
    <property type="nucleotide sequence ID" value="NM_100585.2"/>
</dbReference>
<dbReference type="SMR" id="Q9LMK4"/>
<dbReference type="STRING" id="3702.Q9LMK4"/>
<dbReference type="PaxDb" id="3702-AT1G07120.1"/>
<dbReference type="ProteomicsDB" id="189673"/>
<dbReference type="EnsemblPlants" id="AT1G07120.1">
    <property type="protein sequence ID" value="AT1G07120.1"/>
    <property type="gene ID" value="AT1G07120"/>
</dbReference>
<dbReference type="GeneID" id="837222"/>
<dbReference type="Gramene" id="AT1G07120.1">
    <property type="protein sequence ID" value="AT1G07120.1"/>
    <property type="gene ID" value="AT1G07120"/>
</dbReference>
<dbReference type="Araport" id="AT1G07120"/>
<dbReference type="TAIR" id="AT1G07120">
    <property type="gene designation" value="IPGAL1"/>
</dbReference>
<dbReference type="eggNOG" id="ENOG502QQ13">
    <property type="taxonomic scope" value="Eukaryota"/>
</dbReference>
<dbReference type="HOGENOM" id="CLU_014032_1_0_1"/>
<dbReference type="OMA" id="HMENKAN"/>
<dbReference type="OrthoDB" id="1922539at2759"/>
<dbReference type="PRO" id="PR:Q9LMK4"/>
<dbReference type="Proteomes" id="UP000006548">
    <property type="component" value="Chromosome 1"/>
</dbReference>
<dbReference type="ExpressionAtlas" id="Q9LMK4">
    <property type="expression patterns" value="baseline and differential"/>
</dbReference>
<dbReference type="GO" id="GO:0009941">
    <property type="term" value="C:chloroplast envelope"/>
    <property type="evidence" value="ECO:0007005"/>
    <property type="project" value="TAIR"/>
</dbReference>
<dbReference type="GO" id="GO:0055028">
    <property type="term" value="C:cortical microtubule"/>
    <property type="evidence" value="ECO:0000314"/>
    <property type="project" value="UniProtKB"/>
</dbReference>
<dbReference type="GO" id="GO:0008017">
    <property type="term" value="F:microtubule binding"/>
    <property type="evidence" value="ECO:0000314"/>
    <property type="project" value="UniProtKB"/>
</dbReference>
<dbReference type="InterPro" id="IPR040265">
    <property type="entry name" value="CHUP1/IPGA1-like"/>
</dbReference>
<dbReference type="PANTHER" id="PTHR31342:SF48">
    <property type="entry name" value="CHUP1-LIKE PROTEIN"/>
    <property type="match status" value="1"/>
</dbReference>
<dbReference type="PANTHER" id="PTHR31342">
    <property type="entry name" value="PROTEIN CHUP1, CHLOROPLASTIC"/>
    <property type="match status" value="1"/>
</dbReference>
<gene>
    <name evidence="4" type="primary">IPGAL1</name>
    <name evidence="6" type="ordered locus">At1g07120</name>
    <name evidence="7" type="ORF">F10K1.18</name>
</gene>
<comment type="function">
    <text evidence="3">Microtubule-associated protein probably involved in the regulation of microtubule organization.</text>
</comment>
<comment type="subcellular location">
    <subcellularLocation>
        <location evidence="3">Cytoplasm</location>
        <location evidence="3">Cytoskeleton</location>
    </subcellularLocation>
    <text evidence="3">Colocalizes with cortical microtubules and binds directly to microtubules.</text>
</comment>
<comment type="similarity">
    <text evidence="5">Belongs to the IPGA1 family.</text>
</comment>
<protein>
    <recommendedName>
        <fullName evidence="4">INCREASED PETAL GROWTH ANISOTROPY 1-like protein 1</fullName>
        <shortName evidence="4">IPGA1-like protein 1</shortName>
    </recommendedName>
</protein>
<reference key="1">
    <citation type="journal article" date="2000" name="Nature">
        <title>Sequence and analysis of chromosome 1 of the plant Arabidopsis thaliana.</title>
        <authorList>
            <person name="Theologis A."/>
            <person name="Ecker J.R."/>
            <person name="Palm C.J."/>
            <person name="Federspiel N.A."/>
            <person name="Kaul S."/>
            <person name="White O."/>
            <person name="Alonso J."/>
            <person name="Altafi H."/>
            <person name="Araujo R."/>
            <person name="Bowman C.L."/>
            <person name="Brooks S.Y."/>
            <person name="Buehler E."/>
            <person name="Chan A."/>
            <person name="Chao Q."/>
            <person name="Chen H."/>
            <person name="Cheuk R.F."/>
            <person name="Chin C.W."/>
            <person name="Chung M.K."/>
            <person name="Conn L."/>
            <person name="Conway A.B."/>
            <person name="Conway A.R."/>
            <person name="Creasy T.H."/>
            <person name="Dewar K."/>
            <person name="Dunn P."/>
            <person name="Etgu P."/>
            <person name="Feldblyum T.V."/>
            <person name="Feng J.-D."/>
            <person name="Fong B."/>
            <person name="Fujii C.Y."/>
            <person name="Gill J.E."/>
            <person name="Goldsmith A.D."/>
            <person name="Haas B."/>
            <person name="Hansen N.F."/>
            <person name="Hughes B."/>
            <person name="Huizar L."/>
            <person name="Hunter J.L."/>
            <person name="Jenkins J."/>
            <person name="Johnson-Hopson C."/>
            <person name="Khan S."/>
            <person name="Khaykin E."/>
            <person name="Kim C.J."/>
            <person name="Koo H.L."/>
            <person name="Kremenetskaia I."/>
            <person name="Kurtz D.B."/>
            <person name="Kwan A."/>
            <person name="Lam B."/>
            <person name="Langin-Hooper S."/>
            <person name="Lee A."/>
            <person name="Lee J.M."/>
            <person name="Lenz C.A."/>
            <person name="Li J.H."/>
            <person name="Li Y.-P."/>
            <person name="Lin X."/>
            <person name="Liu S.X."/>
            <person name="Liu Z.A."/>
            <person name="Luros J.S."/>
            <person name="Maiti R."/>
            <person name="Marziali A."/>
            <person name="Militscher J."/>
            <person name="Miranda M."/>
            <person name="Nguyen M."/>
            <person name="Nierman W.C."/>
            <person name="Osborne B.I."/>
            <person name="Pai G."/>
            <person name="Peterson J."/>
            <person name="Pham P.K."/>
            <person name="Rizzo M."/>
            <person name="Rooney T."/>
            <person name="Rowley D."/>
            <person name="Sakano H."/>
            <person name="Salzberg S.L."/>
            <person name="Schwartz J.R."/>
            <person name="Shinn P."/>
            <person name="Southwick A.M."/>
            <person name="Sun H."/>
            <person name="Tallon L.J."/>
            <person name="Tambunga G."/>
            <person name="Toriumi M.J."/>
            <person name="Town C.D."/>
            <person name="Utterback T."/>
            <person name="Van Aken S."/>
            <person name="Vaysberg M."/>
            <person name="Vysotskaia V.S."/>
            <person name="Walker M."/>
            <person name="Wu D."/>
            <person name="Yu G."/>
            <person name="Fraser C.M."/>
            <person name="Venter J.C."/>
            <person name="Davis R.W."/>
        </authorList>
    </citation>
    <scope>NUCLEOTIDE SEQUENCE [LARGE SCALE GENOMIC DNA]</scope>
    <source>
        <strain>cv. Columbia</strain>
    </source>
</reference>
<reference key="2">
    <citation type="journal article" date="2017" name="Plant J.">
        <title>Araport11: a complete reannotation of the Arabidopsis thaliana reference genome.</title>
        <authorList>
            <person name="Cheng C.Y."/>
            <person name="Krishnakumar V."/>
            <person name="Chan A.P."/>
            <person name="Thibaud-Nissen F."/>
            <person name="Schobel S."/>
            <person name="Town C.D."/>
        </authorList>
    </citation>
    <scope>GENOME REANNOTATION</scope>
    <source>
        <strain>cv. Columbia</strain>
    </source>
</reference>
<reference key="3">
    <citation type="journal article" date="2019" name="J. Exp. Bot.">
        <title>Arabidopsis IPGA1 is a microtubule-associated protein essential for cell expansion during petal morphogenesis.</title>
        <authorList>
            <person name="Yang Y."/>
            <person name="Chen B."/>
            <person name="Dang X."/>
            <person name="Zhu L."/>
            <person name="Rao J."/>
            <person name="Ren H."/>
            <person name="Lin C."/>
            <person name="Qin Y."/>
            <person name="Lin D."/>
        </authorList>
    </citation>
    <scope>FUNCTION</scope>
    <scope>SUBCELLULAR LOCATION</scope>
    <source>
        <strain>cv. Columbia</strain>
    </source>
</reference>